<feature type="chain" id="PRO_0000453349" description="Transcription factor cghD">
    <location>
        <begin position="1"/>
        <end position="484"/>
    </location>
</feature>
<feature type="DNA-binding region" description="Zn(2)-C6 fungal-type" evidence="1">
    <location>
        <begin position="21"/>
        <end position="54"/>
    </location>
</feature>
<feature type="region of interest" description="Disordered" evidence="2">
    <location>
        <begin position="59"/>
        <end position="117"/>
    </location>
</feature>
<feature type="region of interest" description="Disordered" evidence="2">
    <location>
        <begin position="136"/>
        <end position="174"/>
    </location>
</feature>
<feature type="region of interest" description="Disordered" evidence="2">
    <location>
        <begin position="202"/>
        <end position="242"/>
    </location>
</feature>
<feature type="region of interest" description="Disordered" evidence="2">
    <location>
        <begin position="386"/>
        <end position="406"/>
    </location>
</feature>
<feature type="compositionally biased region" description="Basic and acidic residues" evidence="2">
    <location>
        <begin position="64"/>
        <end position="76"/>
    </location>
</feature>
<feature type="compositionally biased region" description="Low complexity" evidence="2">
    <location>
        <begin position="77"/>
        <end position="107"/>
    </location>
</feature>
<feature type="compositionally biased region" description="Low complexity" evidence="2">
    <location>
        <begin position="202"/>
        <end position="213"/>
    </location>
</feature>
<proteinExistence type="inferred from homology"/>
<keyword id="KW-0238">DNA-binding</keyword>
<keyword id="KW-0479">Metal-binding</keyword>
<keyword id="KW-0539">Nucleus</keyword>
<keyword id="KW-1185">Reference proteome</keyword>
<keyword id="KW-0804">Transcription</keyword>
<keyword id="KW-0805">Transcription regulation</keyword>
<keyword id="KW-0862">Zinc</keyword>
<reference key="1">
    <citation type="journal article" date="2015" name="Genome Announc.">
        <title>Draft genome sequence of the cellulolytic fungus Chaetomium globosum.</title>
        <authorList>
            <person name="Cuomo C.A."/>
            <person name="Untereiner W.A."/>
            <person name="Ma L.-J."/>
            <person name="Grabherr M."/>
            <person name="Birren B.W."/>
        </authorList>
    </citation>
    <scope>NUCLEOTIDE SEQUENCE [LARGE SCALE GENOMIC DNA]</scope>
    <source>
        <strain>ATCC 6205 / CBS 148.51 / DSM 1962 / NBRC 6347 / NRRL 1970</strain>
    </source>
</reference>
<reference key="2">
    <citation type="journal article" date="2015" name="ChemBioChem">
        <title>Involvement of lipocalin-like CghA in decalin-forming stereoselective intramolecular [4+2] cycloaddition.</title>
        <authorList>
            <person name="Sato M."/>
            <person name="Yagishita F."/>
            <person name="Mino T."/>
            <person name="Uchiyama N."/>
            <person name="Patel A."/>
            <person name="Chooi Y.H."/>
            <person name="Goda Y."/>
            <person name="Xu W."/>
            <person name="Noguchi H."/>
            <person name="Yamamoto T."/>
            <person name="Hotta K."/>
            <person name="Houk K.N."/>
            <person name="Tang Y."/>
            <person name="Watanabe K."/>
        </authorList>
    </citation>
    <scope>FUNCTION</scope>
</reference>
<dbReference type="EMBL" id="CH408030">
    <property type="protein sequence ID" value="EAQ90436.1"/>
    <property type="molecule type" value="Genomic_DNA"/>
</dbReference>
<dbReference type="RefSeq" id="XP_001228887.1">
    <property type="nucleotide sequence ID" value="XM_001228886.1"/>
</dbReference>
<dbReference type="GeneID" id="4388356"/>
<dbReference type="VEuPathDB" id="FungiDB:CHGG_02371"/>
<dbReference type="eggNOG" id="ENOG502S7PT">
    <property type="taxonomic scope" value="Eukaryota"/>
</dbReference>
<dbReference type="HOGENOM" id="CLU_578946_0_0_1"/>
<dbReference type="InParanoid" id="Q2HBN3"/>
<dbReference type="OMA" id="DATAPCQ"/>
<dbReference type="OrthoDB" id="4222821at2759"/>
<dbReference type="Proteomes" id="UP000001056">
    <property type="component" value="Unassembled WGS sequence"/>
</dbReference>
<dbReference type="GO" id="GO:0005634">
    <property type="term" value="C:nucleus"/>
    <property type="evidence" value="ECO:0007669"/>
    <property type="project" value="UniProtKB-SubCell"/>
</dbReference>
<dbReference type="GO" id="GO:0003677">
    <property type="term" value="F:DNA binding"/>
    <property type="evidence" value="ECO:0007669"/>
    <property type="project" value="UniProtKB-KW"/>
</dbReference>
<dbReference type="GO" id="GO:0000981">
    <property type="term" value="F:DNA-binding transcription factor activity, RNA polymerase II-specific"/>
    <property type="evidence" value="ECO:0007669"/>
    <property type="project" value="InterPro"/>
</dbReference>
<dbReference type="GO" id="GO:0008270">
    <property type="term" value="F:zinc ion binding"/>
    <property type="evidence" value="ECO:0007669"/>
    <property type="project" value="InterPro"/>
</dbReference>
<dbReference type="CDD" id="cd00067">
    <property type="entry name" value="GAL4"/>
    <property type="match status" value="1"/>
</dbReference>
<dbReference type="Gene3D" id="4.10.240.10">
    <property type="entry name" value="Zn(2)-C6 fungal-type DNA-binding domain"/>
    <property type="match status" value="1"/>
</dbReference>
<dbReference type="InterPro" id="IPR050797">
    <property type="entry name" value="Carb_Metab_Trans_Reg"/>
</dbReference>
<dbReference type="InterPro" id="IPR036864">
    <property type="entry name" value="Zn2-C6_fun-type_DNA-bd_sf"/>
</dbReference>
<dbReference type="InterPro" id="IPR001138">
    <property type="entry name" value="Zn2Cys6_DnaBD"/>
</dbReference>
<dbReference type="PANTHER" id="PTHR31668">
    <property type="entry name" value="GLUCOSE TRANSPORT TRANSCRIPTION REGULATOR RGT1-RELATED-RELATED"/>
    <property type="match status" value="1"/>
</dbReference>
<dbReference type="SMART" id="SM00066">
    <property type="entry name" value="GAL4"/>
    <property type="match status" value="1"/>
</dbReference>
<dbReference type="SUPFAM" id="SSF57701">
    <property type="entry name" value="Zn2/Cys6 DNA-binding domain"/>
    <property type="match status" value="1"/>
</dbReference>
<dbReference type="PROSITE" id="PS00463">
    <property type="entry name" value="ZN2_CY6_FUNGAL_1"/>
    <property type="match status" value="1"/>
</dbReference>
<dbReference type="PROSITE" id="PS50048">
    <property type="entry name" value="ZN2_CY6_FUNGAL_2"/>
    <property type="match status" value="1"/>
</dbReference>
<sequence>MFQTESHPAGGSPLQSIRSSCDRCRLQKLKCTVQSMESDGRMVCERCVRAKVPCAFGRRRRASRPSDTKKQGDSSTRRSTAPRTTNPEPTVLTPPLSTTSSTSEQTLGGATPSPTLATSSALEAPLETLAECEPDTTAPTYSYHHHHHDSYQLGEGPPTPFPNPATTGGGSGSSMMDWDWLEQDFHANELYCLDPELLASAPASTSTSTGSPTAHHRALPDGGSGSSTMSMGGGADTPFSTTASVAGRRLPALIAEMQQRLEALENGAWLHDGAQSFDHYPIGAVLRLSQEFGALAGQVLGMAATYGGGGGVPPSDVAGLQMMAAVGGGGGLYELGRGGLAEGGSSTATVLLVLGGYVFLVRLYGLVLGHFHAHLNRIPSGSLGGHMHSTPAPTTSPTLQLGELPSGGAMPDVSRIHAALGMLLAALHSVEEQLGQGGEVAREMVVSILTQGSGLEPAKLQDGFGDLGEKVRSVKELLREKMGL</sequence>
<name>CGHD_CHAGB</name>
<accession>Q2HBN3</accession>
<organism>
    <name type="scientific">Chaetomium globosum (strain ATCC 6205 / CBS 148.51 / DSM 1962 / NBRC 6347 / NRRL 1970)</name>
    <name type="common">Soil fungus</name>
    <dbReference type="NCBI Taxonomy" id="306901"/>
    <lineage>
        <taxon>Eukaryota</taxon>
        <taxon>Fungi</taxon>
        <taxon>Dikarya</taxon>
        <taxon>Ascomycota</taxon>
        <taxon>Pezizomycotina</taxon>
        <taxon>Sordariomycetes</taxon>
        <taxon>Sordariomycetidae</taxon>
        <taxon>Sordariales</taxon>
        <taxon>Chaetomiaceae</taxon>
        <taxon>Chaetomium</taxon>
    </lineage>
</organism>
<gene>
    <name evidence="3" type="primary">cghD</name>
    <name type="ORF">CHGG_02371</name>
</gene>
<evidence type="ECO:0000255" key="1">
    <source>
        <dbReference type="PROSITE-ProRule" id="PRU00227"/>
    </source>
</evidence>
<evidence type="ECO:0000256" key="2">
    <source>
        <dbReference type="SAM" id="MobiDB-lite"/>
    </source>
</evidence>
<evidence type="ECO:0000303" key="3">
    <source>
    </source>
</evidence>
<evidence type="ECO:0000305" key="4">
    <source>
    </source>
</evidence>
<protein>
    <recommendedName>
        <fullName evidence="3">Transcription factor cghD</fullName>
    </recommendedName>
    <alternativeName>
        <fullName evidence="3">Sch210972 biosynthesis cluster protein D</fullName>
    </alternativeName>
</protein>
<comment type="function">
    <text evidence="4">Transcription factor that regulates the expression of the gene cluster that mediates the biosynthesis of the tetramic acid Sch210972, a potential anti-HIV fungal natural product that contains a decalin core.</text>
</comment>
<comment type="subcellular location">
    <subcellularLocation>
        <location evidence="1">Nucleus</location>
    </subcellularLocation>
</comment>